<keyword id="KW-1003">Cell membrane</keyword>
<keyword id="KW-1015">Disulfide bond</keyword>
<keyword id="KW-0297">G-protein coupled receptor</keyword>
<keyword id="KW-0325">Glycoprotein</keyword>
<keyword id="KW-0472">Membrane</keyword>
<keyword id="KW-0552">Olfaction</keyword>
<keyword id="KW-0675">Receptor</keyword>
<keyword id="KW-1185">Reference proteome</keyword>
<keyword id="KW-0716">Sensory transduction</keyword>
<keyword id="KW-0807">Transducer</keyword>
<keyword id="KW-0812">Transmembrane</keyword>
<keyword id="KW-1133">Transmembrane helix</keyword>
<evidence type="ECO:0000255" key="1"/>
<evidence type="ECO:0000255" key="2">
    <source>
        <dbReference type="PROSITE-ProRule" id="PRU00521"/>
    </source>
</evidence>
<evidence type="ECO:0000305" key="3"/>
<dbReference type="EMBL" id="AB065744">
    <property type="protein sequence ID" value="BAC05964.1"/>
    <property type="molecule type" value="Genomic_DNA"/>
</dbReference>
<dbReference type="EMBL" id="CH471076">
    <property type="protein sequence ID" value="EAW73716.1"/>
    <property type="molecule type" value="Genomic_DNA"/>
</dbReference>
<dbReference type="EMBL" id="BC136978">
    <property type="protein sequence ID" value="AAI36979.1"/>
    <property type="molecule type" value="mRNA"/>
</dbReference>
<dbReference type="EMBL" id="BC136980">
    <property type="protein sequence ID" value="AAI36981.1"/>
    <property type="molecule type" value="mRNA"/>
</dbReference>
<dbReference type="EMBL" id="AF399520">
    <property type="protein sequence ID" value="AAK95005.1"/>
    <property type="molecule type" value="Genomic_DNA"/>
</dbReference>
<dbReference type="EMBL" id="BK004499">
    <property type="protein sequence ID" value="DAA04897.1"/>
    <property type="molecule type" value="Genomic_DNA"/>
</dbReference>
<dbReference type="CCDS" id="CCDS31533.1"/>
<dbReference type="RefSeq" id="NP_001005282.1">
    <property type="nucleotide sequence ID" value="NM_001005282.1"/>
</dbReference>
<dbReference type="SMR" id="Q8NGP6"/>
<dbReference type="BioGRID" id="128546">
    <property type="interactions" value="11"/>
</dbReference>
<dbReference type="FunCoup" id="Q8NGP6">
    <property type="interactions" value="416"/>
</dbReference>
<dbReference type="IntAct" id="Q8NGP6">
    <property type="interactions" value="3"/>
</dbReference>
<dbReference type="STRING" id="9606.ENSP00000323354"/>
<dbReference type="GlyCosmos" id="Q8NGP6">
    <property type="glycosylation" value="1 site, No reported glycans"/>
</dbReference>
<dbReference type="GlyGen" id="Q8NGP6">
    <property type="glycosylation" value="1 site"/>
</dbReference>
<dbReference type="iPTMnet" id="Q8NGP6"/>
<dbReference type="PhosphoSitePlus" id="Q8NGP6"/>
<dbReference type="BioMuta" id="OR5M8"/>
<dbReference type="DMDM" id="38372743"/>
<dbReference type="PaxDb" id="9606-ENSP00000323354"/>
<dbReference type="ProteomicsDB" id="73570"/>
<dbReference type="Antibodypedia" id="66680">
    <property type="antibodies" value="56 antibodies from 12 providers"/>
</dbReference>
<dbReference type="DNASU" id="219484"/>
<dbReference type="Ensembl" id="ENST00000327216.5">
    <property type="protein sequence ID" value="ENSP00000323354.2"/>
    <property type="gene ID" value="ENSG00000181371.5"/>
</dbReference>
<dbReference type="Ensembl" id="ENST00000709015.1">
    <property type="protein sequence ID" value="ENSP00000517460.1"/>
    <property type="gene ID" value="ENSG00000291862.1"/>
</dbReference>
<dbReference type="GeneID" id="219484"/>
<dbReference type="KEGG" id="hsa:219484"/>
<dbReference type="MANE-Select" id="ENST00000327216.5">
    <property type="protein sequence ID" value="ENSP00000323354.2"/>
    <property type="RefSeq nucleotide sequence ID" value="NM_001005282.1"/>
    <property type="RefSeq protein sequence ID" value="NP_001005282.1"/>
</dbReference>
<dbReference type="UCSC" id="uc001nix.1">
    <property type="organism name" value="human"/>
</dbReference>
<dbReference type="AGR" id="HGNC:14846"/>
<dbReference type="CTD" id="219484"/>
<dbReference type="GeneCards" id="OR5M8"/>
<dbReference type="HGNC" id="HGNC:14846">
    <property type="gene designation" value="OR5M8"/>
</dbReference>
<dbReference type="HPA" id="ENSG00000181371">
    <property type="expression patterns" value="Not detected"/>
</dbReference>
<dbReference type="neXtProt" id="NX_Q8NGP6"/>
<dbReference type="PharmGKB" id="PA32558"/>
<dbReference type="VEuPathDB" id="HostDB:ENSG00000181371"/>
<dbReference type="eggNOG" id="ENOG502RTZH">
    <property type="taxonomic scope" value="Eukaryota"/>
</dbReference>
<dbReference type="GeneTree" id="ENSGT01120000271889"/>
<dbReference type="HOGENOM" id="CLU_012526_1_0_1"/>
<dbReference type="InParanoid" id="Q8NGP6"/>
<dbReference type="OMA" id="ELSMFIV"/>
<dbReference type="OrthoDB" id="9518048at2759"/>
<dbReference type="PAN-GO" id="Q8NGP6">
    <property type="GO annotations" value="4 GO annotations based on evolutionary models"/>
</dbReference>
<dbReference type="PhylomeDB" id="Q8NGP6"/>
<dbReference type="TreeFam" id="TF352751"/>
<dbReference type="PathwayCommons" id="Q8NGP6"/>
<dbReference type="Reactome" id="R-HSA-9752946">
    <property type="pathway name" value="Expression and translocation of olfactory receptors"/>
</dbReference>
<dbReference type="BioGRID-ORCS" id="219484">
    <property type="hits" value="6 hits in 733 CRISPR screens"/>
</dbReference>
<dbReference type="GeneWiki" id="OR5M8"/>
<dbReference type="GenomeRNAi" id="219484"/>
<dbReference type="Pharos" id="Q8NGP6">
    <property type="development level" value="Tdark"/>
</dbReference>
<dbReference type="PRO" id="PR:Q8NGP6"/>
<dbReference type="Proteomes" id="UP000005640">
    <property type="component" value="Chromosome 11"/>
</dbReference>
<dbReference type="RNAct" id="Q8NGP6">
    <property type="molecule type" value="protein"/>
</dbReference>
<dbReference type="Bgee" id="ENSG00000181371">
    <property type="expression patterns" value="Expressed in male germ line stem cell (sensu Vertebrata) in testis and 2 other cell types or tissues"/>
</dbReference>
<dbReference type="ExpressionAtlas" id="Q8NGP6">
    <property type="expression patterns" value="baseline and differential"/>
</dbReference>
<dbReference type="GO" id="GO:0005886">
    <property type="term" value="C:plasma membrane"/>
    <property type="evidence" value="ECO:0007669"/>
    <property type="project" value="UniProtKB-SubCell"/>
</dbReference>
<dbReference type="GO" id="GO:0004930">
    <property type="term" value="F:G protein-coupled receptor activity"/>
    <property type="evidence" value="ECO:0007669"/>
    <property type="project" value="UniProtKB-KW"/>
</dbReference>
<dbReference type="GO" id="GO:0005549">
    <property type="term" value="F:odorant binding"/>
    <property type="evidence" value="ECO:0000318"/>
    <property type="project" value="GO_Central"/>
</dbReference>
<dbReference type="GO" id="GO:0004984">
    <property type="term" value="F:olfactory receptor activity"/>
    <property type="evidence" value="ECO:0000318"/>
    <property type="project" value="GO_Central"/>
</dbReference>
<dbReference type="GO" id="GO:0007186">
    <property type="term" value="P:G protein-coupled receptor signaling pathway"/>
    <property type="evidence" value="ECO:0000318"/>
    <property type="project" value="GO_Central"/>
</dbReference>
<dbReference type="GO" id="GO:0007608">
    <property type="term" value="P:sensory perception of smell"/>
    <property type="evidence" value="ECO:0000318"/>
    <property type="project" value="GO_Central"/>
</dbReference>
<dbReference type="CDD" id="cd15412">
    <property type="entry name" value="7tmA_OR5M-like"/>
    <property type="match status" value="1"/>
</dbReference>
<dbReference type="FunFam" id="1.10.1220.70:FF:000001">
    <property type="entry name" value="Olfactory receptor"/>
    <property type="match status" value="1"/>
</dbReference>
<dbReference type="FunFam" id="1.20.1070.10:FF:000003">
    <property type="entry name" value="Olfactory receptor"/>
    <property type="match status" value="1"/>
</dbReference>
<dbReference type="Gene3D" id="1.20.1070.10">
    <property type="entry name" value="Rhodopsin 7-helix transmembrane proteins"/>
    <property type="match status" value="1"/>
</dbReference>
<dbReference type="InterPro" id="IPR000276">
    <property type="entry name" value="GPCR_Rhodpsn"/>
</dbReference>
<dbReference type="InterPro" id="IPR017452">
    <property type="entry name" value="GPCR_Rhodpsn_7TM"/>
</dbReference>
<dbReference type="InterPro" id="IPR000725">
    <property type="entry name" value="Olfact_rcpt"/>
</dbReference>
<dbReference type="PANTHER" id="PTHR48018">
    <property type="entry name" value="OLFACTORY RECEPTOR"/>
    <property type="match status" value="1"/>
</dbReference>
<dbReference type="Pfam" id="PF13853">
    <property type="entry name" value="7tm_4"/>
    <property type="match status" value="1"/>
</dbReference>
<dbReference type="PRINTS" id="PR00237">
    <property type="entry name" value="GPCRRHODOPSN"/>
</dbReference>
<dbReference type="PRINTS" id="PR00245">
    <property type="entry name" value="OLFACTORYR"/>
</dbReference>
<dbReference type="SUPFAM" id="SSF81321">
    <property type="entry name" value="Family A G protein-coupled receptor-like"/>
    <property type="match status" value="1"/>
</dbReference>
<dbReference type="PROSITE" id="PS00237">
    <property type="entry name" value="G_PROTEIN_RECEP_F1_1"/>
    <property type="match status" value="1"/>
</dbReference>
<dbReference type="PROSITE" id="PS50262">
    <property type="entry name" value="G_PROTEIN_RECEP_F1_2"/>
    <property type="match status" value="1"/>
</dbReference>
<sequence>MRRNCTLVTEFILLGLTSRRELQILLFTLFLAIYMVTVAGNLGMIVLIQANAWLHMPMYFFLSHLSFVDLCFSSNVTPKMLEIFLSEKKSISYPACLVQCYLFIALVHVEIYILAVMAFDRYMAICNPLLYGSRMSKSVCSFLITVPYVYGALTGLMETMWTYNLAFCGPNEINHFYCADPPLIKLACSDTYNKELSMFIVAGWNLSFSLFIICISYLYIFPAILKIRSTEGRQKAFSTCGSHLTAVTIFYATLFFMYLRPPSKESVEQGKMVAVFYTTVIPMLNLIIYSLRNKNVKEALIKELSMKIYFS</sequence>
<organism>
    <name type="scientific">Homo sapiens</name>
    <name type="common">Human</name>
    <dbReference type="NCBI Taxonomy" id="9606"/>
    <lineage>
        <taxon>Eukaryota</taxon>
        <taxon>Metazoa</taxon>
        <taxon>Chordata</taxon>
        <taxon>Craniata</taxon>
        <taxon>Vertebrata</taxon>
        <taxon>Euteleostomi</taxon>
        <taxon>Mammalia</taxon>
        <taxon>Eutheria</taxon>
        <taxon>Euarchontoglires</taxon>
        <taxon>Primates</taxon>
        <taxon>Haplorrhini</taxon>
        <taxon>Catarrhini</taxon>
        <taxon>Hominidae</taxon>
        <taxon>Homo</taxon>
    </lineage>
</organism>
<proteinExistence type="evidence at transcript level"/>
<feature type="chain" id="PRO_0000150606" description="Olfactory receptor 5M8">
    <location>
        <begin position="1"/>
        <end position="311"/>
    </location>
</feature>
<feature type="topological domain" description="Extracellular" evidence="1">
    <location>
        <begin position="1"/>
        <end position="24"/>
    </location>
</feature>
<feature type="transmembrane region" description="Helical; Name=1" evidence="1">
    <location>
        <begin position="25"/>
        <end position="45"/>
    </location>
</feature>
<feature type="topological domain" description="Cytoplasmic" evidence="1">
    <location>
        <begin position="46"/>
        <end position="53"/>
    </location>
</feature>
<feature type="transmembrane region" description="Helical; Name=2" evidence="1">
    <location>
        <begin position="54"/>
        <end position="74"/>
    </location>
</feature>
<feature type="topological domain" description="Extracellular" evidence="1">
    <location>
        <begin position="75"/>
        <end position="98"/>
    </location>
</feature>
<feature type="transmembrane region" description="Helical; Name=3" evidence="1">
    <location>
        <begin position="99"/>
        <end position="119"/>
    </location>
</feature>
<feature type="topological domain" description="Cytoplasmic" evidence="1">
    <location>
        <begin position="120"/>
        <end position="138"/>
    </location>
</feature>
<feature type="transmembrane region" description="Helical; Name=4" evidence="1">
    <location>
        <begin position="139"/>
        <end position="159"/>
    </location>
</feature>
<feature type="topological domain" description="Extracellular" evidence="1">
    <location>
        <begin position="160"/>
        <end position="195"/>
    </location>
</feature>
<feature type="transmembrane region" description="Helical; Name=5" evidence="1">
    <location>
        <begin position="196"/>
        <end position="216"/>
    </location>
</feature>
<feature type="topological domain" description="Cytoplasmic" evidence="1">
    <location>
        <begin position="217"/>
        <end position="236"/>
    </location>
</feature>
<feature type="transmembrane region" description="Helical; Name=6" evidence="1">
    <location>
        <begin position="237"/>
        <end position="257"/>
    </location>
</feature>
<feature type="topological domain" description="Extracellular" evidence="1">
    <location>
        <begin position="258"/>
        <end position="270"/>
    </location>
</feature>
<feature type="transmembrane region" description="Helical; Name=7" evidence="1">
    <location>
        <begin position="271"/>
        <end position="291"/>
    </location>
</feature>
<feature type="topological domain" description="Cytoplasmic" evidence="1">
    <location>
        <begin position="292"/>
        <end position="311"/>
    </location>
</feature>
<feature type="glycosylation site" description="N-linked (GlcNAc...) asparagine" evidence="1">
    <location>
        <position position="4"/>
    </location>
</feature>
<feature type="disulfide bond" evidence="2">
    <location>
        <begin position="96"/>
        <end position="188"/>
    </location>
</feature>
<protein>
    <recommendedName>
        <fullName>Olfactory receptor 5M8</fullName>
    </recommendedName>
    <alternativeName>
        <fullName>Olfactory receptor OR11-194</fullName>
    </alternativeName>
</protein>
<comment type="function">
    <text evidence="3">Odorant receptor.</text>
</comment>
<comment type="subcellular location">
    <subcellularLocation>
        <location>Cell membrane</location>
        <topology>Multi-pass membrane protein</topology>
    </subcellularLocation>
</comment>
<comment type="similarity">
    <text evidence="2">Belongs to the G-protein coupled receptor 1 family.</text>
</comment>
<comment type="online information" name="Human Olfactory Receptor Data Exploratorium (HORDE)">
    <link uri="http://genome.weizmann.ac.il/horde/card/index/symbol:OR5M8"/>
</comment>
<accession>Q8NGP6</accession>
<accession>B2RNM5</accession>
<accession>Q6IEW3</accession>
<accession>Q96RB8</accession>
<reference key="1">
    <citation type="submission" date="2001-07" db="EMBL/GenBank/DDBJ databases">
        <title>Genome-wide discovery and analysis of human seven transmembrane helix receptor genes.</title>
        <authorList>
            <person name="Suwa M."/>
            <person name="Sato T."/>
            <person name="Okouchi I."/>
            <person name="Arita M."/>
            <person name="Futami K."/>
            <person name="Matsumoto S."/>
            <person name="Tsutsumi S."/>
            <person name="Aburatani H."/>
            <person name="Asai K."/>
            <person name="Akiyama Y."/>
        </authorList>
    </citation>
    <scope>NUCLEOTIDE SEQUENCE [GENOMIC DNA]</scope>
</reference>
<reference key="2">
    <citation type="submission" date="2005-07" db="EMBL/GenBank/DDBJ databases">
        <authorList>
            <person name="Mural R.J."/>
            <person name="Istrail S."/>
            <person name="Sutton G.G."/>
            <person name="Florea L."/>
            <person name="Halpern A.L."/>
            <person name="Mobarry C.M."/>
            <person name="Lippert R."/>
            <person name="Walenz B."/>
            <person name="Shatkay H."/>
            <person name="Dew I."/>
            <person name="Miller J.R."/>
            <person name="Flanigan M.J."/>
            <person name="Edwards N.J."/>
            <person name="Bolanos R."/>
            <person name="Fasulo D."/>
            <person name="Halldorsson B.V."/>
            <person name="Hannenhalli S."/>
            <person name="Turner R."/>
            <person name="Yooseph S."/>
            <person name="Lu F."/>
            <person name="Nusskern D.R."/>
            <person name="Shue B.C."/>
            <person name="Zheng X.H."/>
            <person name="Zhong F."/>
            <person name="Delcher A.L."/>
            <person name="Huson D.H."/>
            <person name="Kravitz S.A."/>
            <person name="Mouchard L."/>
            <person name="Reinert K."/>
            <person name="Remington K.A."/>
            <person name="Clark A.G."/>
            <person name="Waterman M.S."/>
            <person name="Eichler E.E."/>
            <person name="Adams M.D."/>
            <person name="Hunkapiller M.W."/>
            <person name="Myers E.W."/>
            <person name="Venter J.C."/>
        </authorList>
    </citation>
    <scope>NUCLEOTIDE SEQUENCE [LARGE SCALE GENOMIC DNA]</scope>
</reference>
<reference key="3">
    <citation type="journal article" date="2004" name="Genome Res.">
        <title>The status, quality, and expansion of the NIH full-length cDNA project: the Mammalian Gene Collection (MGC).</title>
        <authorList>
            <consortium name="The MGC Project Team"/>
        </authorList>
    </citation>
    <scope>NUCLEOTIDE SEQUENCE [LARGE SCALE MRNA]</scope>
</reference>
<reference key="4">
    <citation type="journal article" date="2002" name="Genomics">
        <title>DEFOG: a practical scheme for deciphering families of genes.</title>
        <authorList>
            <person name="Fuchs T."/>
            <person name="Malecova B."/>
            <person name="Linhart C."/>
            <person name="Sharan R."/>
            <person name="Khen M."/>
            <person name="Herwig R."/>
            <person name="Shmulevich D."/>
            <person name="Elkon R."/>
            <person name="Steinfath M."/>
            <person name="O'Brien J.K."/>
            <person name="Radelof U."/>
            <person name="Lehrach H."/>
            <person name="Lancet D."/>
            <person name="Shamir R."/>
        </authorList>
    </citation>
    <scope>NUCLEOTIDE SEQUENCE [GENOMIC DNA] OF 67-282</scope>
</reference>
<reference key="5">
    <citation type="journal article" date="2004" name="Proc. Natl. Acad. Sci. U.S.A.">
        <title>The human olfactory receptor gene family.</title>
        <authorList>
            <person name="Malnic B."/>
            <person name="Godfrey P.A."/>
            <person name="Buck L.B."/>
        </authorList>
    </citation>
    <scope>IDENTIFICATION</scope>
</reference>
<reference key="6">
    <citation type="journal article" date="2004" name="Proc. Natl. Acad. Sci. U.S.A.">
        <authorList>
            <person name="Malnic B."/>
            <person name="Godfrey P.A."/>
            <person name="Buck L.B."/>
        </authorList>
    </citation>
    <scope>ERRATUM OF PUBMED:14983052</scope>
</reference>
<gene>
    <name type="primary">OR5M8</name>
</gene>
<name>OR5M8_HUMAN</name>